<evidence type="ECO:0000255" key="1">
    <source>
        <dbReference type="HAMAP-Rule" id="MF_01227"/>
    </source>
</evidence>
<dbReference type="EC" id="6.3.4.2" evidence="1"/>
<dbReference type="EMBL" id="CP000937">
    <property type="protein sequence ID" value="ABZ86768.1"/>
    <property type="molecule type" value="Genomic_DNA"/>
</dbReference>
<dbReference type="SMR" id="B0U0L7"/>
<dbReference type="MEROPS" id="C26.964"/>
<dbReference type="KEGG" id="fph:Fphi_0550"/>
<dbReference type="eggNOG" id="COG0504">
    <property type="taxonomic scope" value="Bacteria"/>
</dbReference>
<dbReference type="HOGENOM" id="CLU_011675_5_0_6"/>
<dbReference type="UniPathway" id="UPA00159">
    <property type="reaction ID" value="UER00277"/>
</dbReference>
<dbReference type="GO" id="GO:0005829">
    <property type="term" value="C:cytosol"/>
    <property type="evidence" value="ECO:0007669"/>
    <property type="project" value="TreeGrafter"/>
</dbReference>
<dbReference type="GO" id="GO:0005524">
    <property type="term" value="F:ATP binding"/>
    <property type="evidence" value="ECO:0007669"/>
    <property type="project" value="UniProtKB-KW"/>
</dbReference>
<dbReference type="GO" id="GO:0003883">
    <property type="term" value="F:CTP synthase activity"/>
    <property type="evidence" value="ECO:0007669"/>
    <property type="project" value="UniProtKB-UniRule"/>
</dbReference>
<dbReference type="GO" id="GO:0004359">
    <property type="term" value="F:glutaminase activity"/>
    <property type="evidence" value="ECO:0007669"/>
    <property type="project" value="RHEA"/>
</dbReference>
<dbReference type="GO" id="GO:0042802">
    <property type="term" value="F:identical protein binding"/>
    <property type="evidence" value="ECO:0007669"/>
    <property type="project" value="TreeGrafter"/>
</dbReference>
<dbReference type="GO" id="GO:0046872">
    <property type="term" value="F:metal ion binding"/>
    <property type="evidence" value="ECO:0007669"/>
    <property type="project" value="UniProtKB-KW"/>
</dbReference>
<dbReference type="GO" id="GO:0044210">
    <property type="term" value="P:'de novo' CTP biosynthetic process"/>
    <property type="evidence" value="ECO:0007669"/>
    <property type="project" value="UniProtKB-UniRule"/>
</dbReference>
<dbReference type="GO" id="GO:0019856">
    <property type="term" value="P:pyrimidine nucleobase biosynthetic process"/>
    <property type="evidence" value="ECO:0007669"/>
    <property type="project" value="TreeGrafter"/>
</dbReference>
<dbReference type="CDD" id="cd03113">
    <property type="entry name" value="CTPS_N"/>
    <property type="match status" value="1"/>
</dbReference>
<dbReference type="CDD" id="cd01746">
    <property type="entry name" value="GATase1_CTP_Synthase"/>
    <property type="match status" value="1"/>
</dbReference>
<dbReference type="FunFam" id="3.40.50.300:FF:000009">
    <property type="entry name" value="CTP synthase"/>
    <property type="match status" value="1"/>
</dbReference>
<dbReference type="FunFam" id="3.40.50.880:FF:000002">
    <property type="entry name" value="CTP synthase"/>
    <property type="match status" value="1"/>
</dbReference>
<dbReference type="Gene3D" id="3.40.50.880">
    <property type="match status" value="1"/>
</dbReference>
<dbReference type="Gene3D" id="3.40.50.300">
    <property type="entry name" value="P-loop containing nucleotide triphosphate hydrolases"/>
    <property type="match status" value="1"/>
</dbReference>
<dbReference type="HAMAP" id="MF_01227">
    <property type="entry name" value="PyrG"/>
    <property type="match status" value="1"/>
</dbReference>
<dbReference type="InterPro" id="IPR029062">
    <property type="entry name" value="Class_I_gatase-like"/>
</dbReference>
<dbReference type="InterPro" id="IPR004468">
    <property type="entry name" value="CTP_synthase"/>
</dbReference>
<dbReference type="InterPro" id="IPR017456">
    <property type="entry name" value="CTP_synthase_N"/>
</dbReference>
<dbReference type="InterPro" id="IPR017926">
    <property type="entry name" value="GATASE"/>
</dbReference>
<dbReference type="InterPro" id="IPR033828">
    <property type="entry name" value="GATase1_CTP_Synthase"/>
</dbReference>
<dbReference type="InterPro" id="IPR027417">
    <property type="entry name" value="P-loop_NTPase"/>
</dbReference>
<dbReference type="NCBIfam" id="NF003792">
    <property type="entry name" value="PRK05380.1"/>
    <property type="match status" value="1"/>
</dbReference>
<dbReference type="NCBIfam" id="TIGR00337">
    <property type="entry name" value="PyrG"/>
    <property type="match status" value="1"/>
</dbReference>
<dbReference type="PANTHER" id="PTHR11550">
    <property type="entry name" value="CTP SYNTHASE"/>
    <property type="match status" value="1"/>
</dbReference>
<dbReference type="PANTHER" id="PTHR11550:SF0">
    <property type="entry name" value="CTP SYNTHASE-RELATED"/>
    <property type="match status" value="1"/>
</dbReference>
<dbReference type="Pfam" id="PF06418">
    <property type="entry name" value="CTP_synth_N"/>
    <property type="match status" value="1"/>
</dbReference>
<dbReference type="Pfam" id="PF00117">
    <property type="entry name" value="GATase"/>
    <property type="match status" value="1"/>
</dbReference>
<dbReference type="SUPFAM" id="SSF52317">
    <property type="entry name" value="Class I glutamine amidotransferase-like"/>
    <property type="match status" value="1"/>
</dbReference>
<dbReference type="SUPFAM" id="SSF52540">
    <property type="entry name" value="P-loop containing nucleoside triphosphate hydrolases"/>
    <property type="match status" value="1"/>
</dbReference>
<dbReference type="PROSITE" id="PS51273">
    <property type="entry name" value="GATASE_TYPE_1"/>
    <property type="match status" value="1"/>
</dbReference>
<reference key="1">
    <citation type="submission" date="2007-12" db="EMBL/GenBank/DDBJ databases">
        <title>Complete sequence of chromosome of Francisella philomiragia subsp. philomiragia ATCC 25017.</title>
        <authorList>
            <consortium name="US DOE Joint Genome Institute"/>
            <person name="Copeland A."/>
            <person name="Lucas S."/>
            <person name="Lapidus A."/>
            <person name="Barry K."/>
            <person name="Detter J.C."/>
            <person name="Glavina del Rio T."/>
            <person name="Hammon N."/>
            <person name="Israni S."/>
            <person name="Dalin E."/>
            <person name="Tice H."/>
            <person name="Pitluck S."/>
            <person name="Chain P."/>
            <person name="Malfatti S."/>
            <person name="Shin M."/>
            <person name="Vergez L."/>
            <person name="Schmutz J."/>
            <person name="Larimer F."/>
            <person name="Land M."/>
            <person name="Hauser L."/>
            <person name="Richardson P."/>
        </authorList>
    </citation>
    <scope>NUCLEOTIDE SEQUENCE [LARGE SCALE GENOMIC DNA]</scope>
    <source>
        <strain>ATCC 25017 / CCUG 19701 / FSC 153 / O#319-036</strain>
    </source>
</reference>
<gene>
    <name evidence="1" type="primary">pyrG</name>
    <name type="ordered locus">Fphi_0550</name>
</gene>
<accession>B0U0L7</accession>
<protein>
    <recommendedName>
        <fullName evidence="1">CTP synthase</fullName>
        <ecNumber evidence="1">6.3.4.2</ecNumber>
    </recommendedName>
    <alternativeName>
        <fullName evidence="1">Cytidine 5'-triphosphate synthase</fullName>
    </alternativeName>
    <alternativeName>
        <fullName evidence="1">Cytidine triphosphate synthetase</fullName>
        <shortName evidence="1">CTP synthetase</shortName>
        <shortName evidence="1">CTPS</shortName>
    </alternativeName>
    <alternativeName>
        <fullName evidence="1">UTP--ammonia ligase</fullName>
    </alternativeName>
</protein>
<comment type="function">
    <text evidence="1">Catalyzes the ATP-dependent amination of UTP to CTP with either L-glutamine or ammonia as the source of nitrogen. Regulates intracellular CTP levels through interactions with the four ribonucleotide triphosphates.</text>
</comment>
<comment type="catalytic activity">
    <reaction evidence="1">
        <text>UTP + L-glutamine + ATP + H2O = CTP + L-glutamate + ADP + phosphate + 2 H(+)</text>
        <dbReference type="Rhea" id="RHEA:26426"/>
        <dbReference type="ChEBI" id="CHEBI:15377"/>
        <dbReference type="ChEBI" id="CHEBI:15378"/>
        <dbReference type="ChEBI" id="CHEBI:29985"/>
        <dbReference type="ChEBI" id="CHEBI:30616"/>
        <dbReference type="ChEBI" id="CHEBI:37563"/>
        <dbReference type="ChEBI" id="CHEBI:43474"/>
        <dbReference type="ChEBI" id="CHEBI:46398"/>
        <dbReference type="ChEBI" id="CHEBI:58359"/>
        <dbReference type="ChEBI" id="CHEBI:456216"/>
        <dbReference type="EC" id="6.3.4.2"/>
    </reaction>
</comment>
<comment type="catalytic activity">
    <reaction evidence="1">
        <text>L-glutamine + H2O = L-glutamate + NH4(+)</text>
        <dbReference type="Rhea" id="RHEA:15889"/>
        <dbReference type="ChEBI" id="CHEBI:15377"/>
        <dbReference type="ChEBI" id="CHEBI:28938"/>
        <dbReference type="ChEBI" id="CHEBI:29985"/>
        <dbReference type="ChEBI" id="CHEBI:58359"/>
    </reaction>
</comment>
<comment type="catalytic activity">
    <reaction evidence="1">
        <text>UTP + NH4(+) + ATP = CTP + ADP + phosphate + 2 H(+)</text>
        <dbReference type="Rhea" id="RHEA:16597"/>
        <dbReference type="ChEBI" id="CHEBI:15378"/>
        <dbReference type="ChEBI" id="CHEBI:28938"/>
        <dbReference type="ChEBI" id="CHEBI:30616"/>
        <dbReference type="ChEBI" id="CHEBI:37563"/>
        <dbReference type="ChEBI" id="CHEBI:43474"/>
        <dbReference type="ChEBI" id="CHEBI:46398"/>
        <dbReference type="ChEBI" id="CHEBI:456216"/>
    </reaction>
</comment>
<comment type="activity regulation">
    <text evidence="1">Allosterically activated by GTP, when glutamine is the substrate; GTP has no effect on the reaction when ammonia is the substrate. The allosteric effector GTP functions by stabilizing the protein conformation that binds the tetrahedral intermediate(s) formed during glutamine hydrolysis. Inhibited by the product CTP, via allosteric rather than competitive inhibition.</text>
</comment>
<comment type="pathway">
    <text evidence="1">Pyrimidine metabolism; CTP biosynthesis via de novo pathway; CTP from UDP: step 2/2.</text>
</comment>
<comment type="subunit">
    <text evidence="1">Homotetramer.</text>
</comment>
<comment type="miscellaneous">
    <text evidence="1">CTPSs have evolved a hybrid strategy for distinguishing between UTP and CTP. The overlapping regions of the product feedback inhibitory and substrate sites recognize a common feature in both compounds, the triphosphate moiety. To differentiate isosteric substrate and product pyrimidine rings, an additional pocket far from the expected kinase/ligase catalytic site, specifically recognizes the cytosine and ribose portions of the product inhibitor.</text>
</comment>
<comment type="similarity">
    <text evidence="1">Belongs to the CTP synthase family.</text>
</comment>
<organism>
    <name type="scientific">Francisella philomiragia subsp. philomiragia (strain ATCC 25017 / CCUG 19701 / FSC 153 / O#319-036)</name>
    <dbReference type="NCBI Taxonomy" id="484022"/>
    <lineage>
        <taxon>Bacteria</taxon>
        <taxon>Pseudomonadati</taxon>
        <taxon>Pseudomonadota</taxon>
        <taxon>Gammaproteobacteria</taxon>
        <taxon>Thiotrichales</taxon>
        <taxon>Francisellaceae</taxon>
        <taxon>Francisella</taxon>
    </lineage>
</organism>
<sequence length="546" mass="61082">MNPNTKIIFVTGGVVSSLGKGVTAASLATLLESRGLNVTMMKLDPYINVDPGTMSPLQHGEVFVTEDGAETDLDLGHYERFIRNKMTQASNFTTGKVYQSVLRRERKGDYLGATIQVIPHITDEIKRRVCEGIAEDVDVAIVEIGGTVGDIESQPFLEAIRQLRIELGRNRTLFVHLTLLPYIRVAGELKTKPTQHSVKELRGIGIQADVLVCRCEKRFDDSEKRKIALFTNVDQDCIFTAEDVDTIYEVPLRYNQQGFDAKLVELLNLNTKEADLSEWQNVVNTIRSTKGEVTIAMVGKYVSLTEAYKSLNEALYNAGYKNGVKVKIKFVDSEEVNDTNVESFFNDADAILVPGGFGSRGVEGKIASIKYARENQIPFLGICLGMQLAVVEYARNVLGIQDAHSSELNPSTTNPVIGLITEWQAEDGTIHQRTHDSDLGGTMRLGGYRCVLKAGSRAREIYQADEVIERHRHRYEVNNNYVDRLEDAGLIFSGRSEDNKLMELIEIPEHKWFIACQAHPEFTSTPRYGHKLFESYIHAAVEKSNK</sequence>
<name>PYRG_FRAP2</name>
<keyword id="KW-0067">ATP-binding</keyword>
<keyword id="KW-0315">Glutamine amidotransferase</keyword>
<keyword id="KW-0436">Ligase</keyword>
<keyword id="KW-0460">Magnesium</keyword>
<keyword id="KW-0479">Metal-binding</keyword>
<keyword id="KW-0547">Nucleotide-binding</keyword>
<keyword id="KW-0665">Pyrimidine biosynthesis</keyword>
<proteinExistence type="inferred from homology"/>
<feature type="chain" id="PRO_1000139458" description="CTP synthase">
    <location>
        <begin position="1"/>
        <end position="546"/>
    </location>
</feature>
<feature type="domain" description="Glutamine amidotransferase type-1" evidence="1">
    <location>
        <begin position="294"/>
        <end position="546"/>
    </location>
</feature>
<feature type="region of interest" description="Amidoligase domain" evidence="1">
    <location>
        <begin position="1"/>
        <end position="269"/>
    </location>
</feature>
<feature type="active site" description="Nucleophile; for glutamine hydrolysis" evidence="1">
    <location>
        <position position="383"/>
    </location>
</feature>
<feature type="active site" evidence="1">
    <location>
        <position position="519"/>
    </location>
</feature>
<feature type="active site" evidence="1">
    <location>
        <position position="521"/>
    </location>
</feature>
<feature type="binding site" evidence="1">
    <location>
        <position position="16"/>
    </location>
    <ligand>
        <name>CTP</name>
        <dbReference type="ChEBI" id="CHEBI:37563"/>
        <note>allosteric inhibitor</note>
    </ligand>
</feature>
<feature type="binding site" evidence="1">
    <location>
        <position position="16"/>
    </location>
    <ligand>
        <name>UTP</name>
        <dbReference type="ChEBI" id="CHEBI:46398"/>
    </ligand>
</feature>
<feature type="binding site" evidence="1">
    <location>
        <begin position="17"/>
        <end position="22"/>
    </location>
    <ligand>
        <name>ATP</name>
        <dbReference type="ChEBI" id="CHEBI:30616"/>
    </ligand>
</feature>
<feature type="binding site" evidence="1">
    <location>
        <position position="74"/>
    </location>
    <ligand>
        <name>ATP</name>
        <dbReference type="ChEBI" id="CHEBI:30616"/>
    </ligand>
</feature>
<feature type="binding site" evidence="1">
    <location>
        <position position="74"/>
    </location>
    <ligand>
        <name>Mg(2+)</name>
        <dbReference type="ChEBI" id="CHEBI:18420"/>
    </ligand>
</feature>
<feature type="binding site" evidence="1">
    <location>
        <position position="143"/>
    </location>
    <ligand>
        <name>Mg(2+)</name>
        <dbReference type="ChEBI" id="CHEBI:18420"/>
    </ligand>
</feature>
<feature type="binding site" evidence="1">
    <location>
        <begin position="150"/>
        <end position="152"/>
    </location>
    <ligand>
        <name>CTP</name>
        <dbReference type="ChEBI" id="CHEBI:37563"/>
        <note>allosteric inhibitor</note>
    </ligand>
</feature>
<feature type="binding site" evidence="1">
    <location>
        <begin position="190"/>
        <end position="195"/>
    </location>
    <ligand>
        <name>CTP</name>
        <dbReference type="ChEBI" id="CHEBI:37563"/>
        <note>allosteric inhibitor</note>
    </ligand>
</feature>
<feature type="binding site" evidence="1">
    <location>
        <begin position="190"/>
        <end position="195"/>
    </location>
    <ligand>
        <name>UTP</name>
        <dbReference type="ChEBI" id="CHEBI:46398"/>
    </ligand>
</feature>
<feature type="binding site" evidence="1">
    <location>
        <position position="226"/>
    </location>
    <ligand>
        <name>CTP</name>
        <dbReference type="ChEBI" id="CHEBI:37563"/>
        <note>allosteric inhibitor</note>
    </ligand>
</feature>
<feature type="binding site" evidence="1">
    <location>
        <position position="226"/>
    </location>
    <ligand>
        <name>UTP</name>
        <dbReference type="ChEBI" id="CHEBI:46398"/>
    </ligand>
</feature>
<feature type="binding site" evidence="1">
    <location>
        <position position="356"/>
    </location>
    <ligand>
        <name>L-glutamine</name>
        <dbReference type="ChEBI" id="CHEBI:58359"/>
    </ligand>
</feature>
<feature type="binding site" evidence="1">
    <location>
        <begin position="384"/>
        <end position="387"/>
    </location>
    <ligand>
        <name>L-glutamine</name>
        <dbReference type="ChEBI" id="CHEBI:58359"/>
    </ligand>
</feature>
<feature type="binding site" evidence="1">
    <location>
        <position position="407"/>
    </location>
    <ligand>
        <name>L-glutamine</name>
        <dbReference type="ChEBI" id="CHEBI:58359"/>
    </ligand>
</feature>
<feature type="binding site" evidence="1">
    <location>
        <position position="474"/>
    </location>
    <ligand>
        <name>L-glutamine</name>
        <dbReference type="ChEBI" id="CHEBI:58359"/>
    </ligand>
</feature>